<dbReference type="EMBL" id="AE017354">
    <property type="protein sequence ID" value="AAU28682.1"/>
    <property type="molecule type" value="Genomic_DNA"/>
</dbReference>
<dbReference type="RefSeq" id="WP_010948324.1">
    <property type="nucleotide sequence ID" value="NC_002942.5"/>
</dbReference>
<dbReference type="RefSeq" id="YP_096629.1">
    <property type="nucleotide sequence ID" value="NC_002942.5"/>
</dbReference>
<dbReference type="SMR" id="Q5ZS95"/>
<dbReference type="STRING" id="272624.lpg2624"/>
<dbReference type="PaxDb" id="272624-lpg2624"/>
<dbReference type="GeneID" id="57036623"/>
<dbReference type="KEGG" id="lpn:lpg2624"/>
<dbReference type="PATRIC" id="fig|272624.6.peg.2800"/>
<dbReference type="eggNOG" id="COG0782">
    <property type="taxonomic scope" value="Bacteria"/>
</dbReference>
<dbReference type="HOGENOM" id="CLU_101379_2_0_6"/>
<dbReference type="OrthoDB" id="9808774at2"/>
<dbReference type="Proteomes" id="UP000000609">
    <property type="component" value="Chromosome"/>
</dbReference>
<dbReference type="GO" id="GO:0003677">
    <property type="term" value="F:DNA binding"/>
    <property type="evidence" value="ECO:0007669"/>
    <property type="project" value="UniProtKB-UniRule"/>
</dbReference>
<dbReference type="GO" id="GO:0070063">
    <property type="term" value="F:RNA polymerase binding"/>
    <property type="evidence" value="ECO:0007669"/>
    <property type="project" value="InterPro"/>
</dbReference>
<dbReference type="GO" id="GO:0006354">
    <property type="term" value="P:DNA-templated transcription elongation"/>
    <property type="evidence" value="ECO:0007669"/>
    <property type="project" value="TreeGrafter"/>
</dbReference>
<dbReference type="GO" id="GO:0032784">
    <property type="term" value="P:regulation of DNA-templated transcription elongation"/>
    <property type="evidence" value="ECO:0007669"/>
    <property type="project" value="UniProtKB-UniRule"/>
</dbReference>
<dbReference type="FunFam" id="1.10.287.180:FF:000001">
    <property type="entry name" value="Transcription elongation factor GreA"/>
    <property type="match status" value="1"/>
</dbReference>
<dbReference type="FunFam" id="3.10.50.30:FF:000001">
    <property type="entry name" value="Transcription elongation factor GreA"/>
    <property type="match status" value="1"/>
</dbReference>
<dbReference type="Gene3D" id="3.10.50.30">
    <property type="entry name" value="Transcription elongation factor, GreA/GreB, C-terminal domain"/>
    <property type="match status" value="1"/>
</dbReference>
<dbReference type="Gene3D" id="1.10.287.180">
    <property type="entry name" value="Transcription elongation factor, GreA/GreB, N-terminal domain"/>
    <property type="match status" value="1"/>
</dbReference>
<dbReference type="HAMAP" id="MF_00105">
    <property type="entry name" value="GreA_GreB"/>
    <property type="match status" value="1"/>
</dbReference>
<dbReference type="InterPro" id="IPR036953">
    <property type="entry name" value="GreA/GreB_C_sf"/>
</dbReference>
<dbReference type="InterPro" id="IPR018151">
    <property type="entry name" value="TF_GreA/GreB_CS"/>
</dbReference>
<dbReference type="InterPro" id="IPR006359">
    <property type="entry name" value="Tscrpt_elong_fac_GreA"/>
</dbReference>
<dbReference type="InterPro" id="IPR028624">
    <property type="entry name" value="Tscrpt_elong_fac_GreA/B"/>
</dbReference>
<dbReference type="InterPro" id="IPR001437">
    <property type="entry name" value="Tscrpt_elong_fac_GreA/B_C"/>
</dbReference>
<dbReference type="InterPro" id="IPR023459">
    <property type="entry name" value="Tscrpt_elong_fac_GreA/B_fam"/>
</dbReference>
<dbReference type="InterPro" id="IPR022691">
    <property type="entry name" value="Tscrpt_elong_fac_GreA/B_N"/>
</dbReference>
<dbReference type="InterPro" id="IPR036805">
    <property type="entry name" value="Tscrpt_elong_fac_GreA/B_N_sf"/>
</dbReference>
<dbReference type="NCBIfam" id="TIGR01462">
    <property type="entry name" value="greA"/>
    <property type="match status" value="1"/>
</dbReference>
<dbReference type="NCBIfam" id="NF001261">
    <property type="entry name" value="PRK00226.1-2"/>
    <property type="match status" value="1"/>
</dbReference>
<dbReference type="NCBIfam" id="NF001263">
    <property type="entry name" value="PRK00226.1-4"/>
    <property type="match status" value="1"/>
</dbReference>
<dbReference type="NCBIfam" id="NF001264">
    <property type="entry name" value="PRK00226.1-5"/>
    <property type="match status" value="1"/>
</dbReference>
<dbReference type="PANTHER" id="PTHR30437">
    <property type="entry name" value="TRANSCRIPTION ELONGATION FACTOR GREA"/>
    <property type="match status" value="1"/>
</dbReference>
<dbReference type="PANTHER" id="PTHR30437:SF4">
    <property type="entry name" value="TRANSCRIPTION ELONGATION FACTOR GREA"/>
    <property type="match status" value="1"/>
</dbReference>
<dbReference type="Pfam" id="PF01272">
    <property type="entry name" value="GreA_GreB"/>
    <property type="match status" value="1"/>
</dbReference>
<dbReference type="Pfam" id="PF03449">
    <property type="entry name" value="GreA_GreB_N"/>
    <property type="match status" value="1"/>
</dbReference>
<dbReference type="PIRSF" id="PIRSF006092">
    <property type="entry name" value="GreA_GreB"/>
    <property type="match status" value="1"/>
</dbReference>
<dbReference type="SUPFAM" id="SSF54534">
    <property type="entry name" value="FKBP-like"/>
    <property type="match status" value="1"/>
</dbReference>
<dbReference type="SUPFAM" id="SSF46557">
    <property type="entry name" value="GreA transcript cleavage protein, N-terminal domain"/>
    <property type="match status" value="1"/>
</dbReference>
<dbReference type="PROSITE" id="PS00829">
    <property type="entry name" value="GREAB_1"/>
    <property type="match status" value="1"/>
</dbReference>
<dbReference type="PROSITE" id="PS00830">
    <property type="entry name" value="GREAB_2"/>
    <property type="match status" value="1"/>
</dbReference>
<name>GREA_LEGPH</name>
<reference key="1">
    <citation type="journal article" date="2004" name="Science">
        <title>The genomic sequence of the accidental pathogen Legionella pneumophila.</title>
        <authorList>
            <person name="Chien M."/>
            <person name="Morozova I."/>
            <person name="Shi S."/>
            <person name="Sheng H."/>
            <person name="Chen J."/>
            <person name="Gomez S.M."/>
            <person name="Asamani G."/>
            <person name="Hill K."/>
            <person name="Nuara J."/>
            <person name="Feder M."/>
            <person name="Rineer J."/>
            <person name="Greenberg J.J."/>
            <person name="Steshenko V."/>
            <person name="Park S.H."/>
            <person name="Zhao B."/>
            <person name="Teplitskaya E."/>
            <person name="Edwards J.R."/>
            <person name="Pampou S."/>
            <person name="Georghiou A."/>
            <person name="Chou I.-C."/>
            <person name="Iannuccilli W."/>
            <person name="Ulz M.E."/>
            <person name="Kim D.H."/>
            <person name="Geringer-Sameth A."/>
            <person name="Goldsberry C."/>
            <person name="Morozov P."/>
            <person name="Fischer S.G."/>
            <person name="Segal G."/>
            <person name="Qu X."/>
            <person name="Rzhetsky A."/>
            <person name="Zhang P."/>
            <person name="Cayanis E."/>
            <person name="De Jong P.J."/>
            <person name="Ju J."/>
            <person name="Kalachikov S."/>
            <person name="Shuman H.A."/>
            <person name="Russo J.J."/>
        </authorList>
    </citation>
    <scope>NUCLEOTIDE SEQUENCE [LARGE SCALE GENOMIC DNA]</scope>
    <source>
        <strain>Philadelphia 1 / ATCC 33152 / DSM 7513</strain>
    </source>
</reference>
<protein>
    <recommendedName>
        <fullName evidence="1">Transcription elongation factor GreA</fullName>
    </recommendedName>
    <alternativeName>
        <fullName evidence="1">Transcript cleavage factor GreA</fullName>
    </alternativeName>
</protein>
<feature type="chain" id="PRO_1000034271" description="Transcription elongation factor GreA">
    <location>
        <begin position="1"/>
        <end position="160"/>
    </location>
</feature>
<feature type="coiled-coil region" evidence="1">
    <location>
        <begin position="50"/>
        <end position="70"/>
    </location>
</feature>
<keyword id="KW-0175">Coiled coil</keyword>
<keyword id="KW-0238">DNA-binding</keyword>
<keyword id="KW-1185">Reference proteome</keyword>
<keyword id="KW-0804">Transcription</keyword>
<keyword id="KW-0805">Transcription regulation</keyword>
<evidence type="ECO:0000255" key="1">
    <source>
        <dbReference type="HAMAP-Rule" id="MF_00105"/>
    </source>
</evidence>
<accession>Q5ZS95</accession>
<organism>
    <name type="scientific">Legionella pneumophila subsp. pneumophila (strain Philadelphia 1 / ATCC 33152 / DSM 7513)</name>
    <dbReference type="NCBI Taxonomy" id="272624"/>
    <lineage>
        <taxon>Bacteria</taxon>
        <taxon>Pseudomonadati</taxon>
        <taxon>Pseudomonadota</taxon>
        <taxon>Gammaproteobacteria</taxon>
        <taxon>Legionellales</taxon>
        <taxon>Legionellaceae</taxon>
        <taxon>Legionella</taxon>
    </lineage>
</organism>
<comment type="function">
    <text evidence="1">Necessary for efficient RNA polymerase transcription elongation past template-encoded arresting sites. The arresting sites in DNA have the property of trapping a certain fraction of elongating RNA polymerases that pass through, resulting in locked ternary complexes. Cleavage of the nascent transcript by cleavage factors such as GreA or GreB allows the resumption of elongation from the new 3'terminus. GreA releases sequences of 2 to 3 nucleotides.</text>
</comment>
<comment type="similarity">
    <text evidence="1">Belongs to the GreA/GreB family.</text>
</comment>
<proteinExistence type="inferred from homology"/>
<gene>
    <name evidence="1" type="primary">greA</name>
    <name type="ordered locus">lpg2624</name>
</gene>
<sequence length="160" mass="17669">MSKHPMTVEGAEALKAELHRLKFVDRPRIVEAIATARAHGDLKENAEYHAAREQQSFNEGRIQELEAKLSHAQIIDISKLPNNGKVIFGSTVTICHVATGSELTYKIVGEDEADIKLNKISYSSPIARALIGKELDDAVTVETPGGMVEYEIIQVQYIVE</sequence>